<keyword id="KW-0963">Cytoplasm</keyword>
<keyword id="KW-0378">Hydrolase</keyword>
<keyword id="KW-0645">Protease</keyword>
<keyword id="KW-1185">Reference proteome</keyword>
<keyword id="KW-0720">Serine protease</keyword>
<organism>
    <name type="scientific">Clostridium tetani (strain Massachusetts / E88)</name>
    <dbReference type="NCBI Taxonomy" id="212717"/>
    <lineage>
        <taxon>Bacteria</taxon>
        <taxon>Bacillati</taxon>
        <taxon>Bacillota</taxon>
        <taxon>Clostridia</taxon>
        <taxon>Eubacteriales</taxon>
        <taxon>Clostridiaceae</taxon>
        <taxon>Clostridium</taxon>
    </lineage>
</organism>
<proteinExistence type="inferred from homology"/>
<reference key="1">
    <citation type="journal article" date="2003" name="Proc. Natl. Acad. Sci. U.S.A.">
        <title>The genome sequence of Clostridium tetani, the causative agent of tetanus disease.</title>
        <authorList>
            <person name="Brueggemann H."/>
            <person name="Baeumer S."/>
            <person name="Fricke W.F."/>
            <person name="Wiezer A."/>
            <person name="Liesegang H."/>
            <person name="Decker I."/>
            <person name="Herzberg C."/>
            <person name="Martinez-Arias R."/>
            <person name="Merkl R."/>
            <person name="Henne A."/>
            <person name="Gottschalk G."/>
        </authorList>
    </citation>
    <scope>NUCLEOTIDE SEQUENCE [LARGE SCALE GENOMIC DNA]</scope>
    <source>
        <strain>Massachusetts / E88</strain>
    </source>
</reference>
<sequence length="194" mass="21428">MSLVPVVVEQTNRGERSYDIYSRLLKDRIIMLSDQVNDVTASLIVAQLLFLEAEDPDKDIFLYINSPGGSITSGMAIYDTMQYIKPDVSTICIGMAASMGAFLLAAGAKGKRFALPNSEIMIHQPLGGFQGQATDIGIHADRILKIKQNLNSILSEKTGQPLEVIQRDTERDNFMDANQAKDYGLIDEVMVKKK</sequence>
<accession>Q891J7</accession>
<dbReference type="EC" id="3.4.21.92" evidence="1"/>
<dbReference type="EMBL" id="AE015927">
    <property type="protein sequence ID" value="AAO36848.1"/>
    <property type="status" value="ALT_INIT"/>
    <property type="molecule type" value="Genomic_DNA"/>
</dbReference>
<dbReference type="RefSeq" id="WP_023439363.1">
    <property type="nucleotide sequence ID" value="NC_004557.1"/>
</dbReference>
<dbReference type="SMR" id="Q891J7"/>
<dbReference type="STRING" id="212717.CTC_02375"/>
<dbReference type="MEROPS" id="S14.001"/>
<dbReference type="GeneID" id="24252545"/>
<dbReference type="KEGG" id="ctc:CTC_02375"/>
<dbReference type="HOGENOM" id="CLU_058707_3_2_9"/>
<dbReference type="OrthoDB" id="9802800at2"/>
<dbReference type="Proteomes" id="UP000001412">
    <property type="component" value="Chromosome"/>
</dbReference>
<dbReference type="GO" id="GO:0005737">
    <property type="term" value="C:cytoplasm"/>
    <property type="evidence" value="ECO:0007669"/>
    <property type="project" value="UniProtKB-SubCell"/>
</dbReference>
<dbReference type="GO" id="GO:0009368">
    <property type="term" value="C:endopeptidase Clp complex"/>
    <property type="evidence" value="ECO:0007669"/>
    <property type="project" value="TreeGrafter"/>
</dbReference>
<dbReference type="GO" id="GO:0004176">
    <property type="term" value="F:ATP-dependent peptidase activity"/>
    <property type="evidence" value="ECO:0007669"/>
    <property type="project" value="InterPro"/>
</dbReference>
<dbReference type="GO" id="GO:0051117">
    <property type="term" value="F:ATPase binding"/>
    <property type="evidence" value="ECO:0007669"/>
    <property type="project" value="TreeGrafter"/>
</dbReference>
<dbReference type="GO" id="GO:0004252">
    <property type="term" value="F:serine-type endopeptidase activity"/>
    <property type="evidence" value="ECO:0007669"/>
    <property type="project" value="UniProtKB-UniRule"/>
</dbReference>
<dbReference type="GO" id="GO:0006515">
    <property type="term" value="P:protein quality control for misfolded or incompletely synthesized proteins"/>
    <property type="evidence" value="ECO:0007669"/>
    <property type="project" value="TreeGrafter"/>
</dbReference>
<dbReference type="CDD" id="cd07017">
    <property type="entry name" value="S14_ClpP_2"/>
    <property type="match status" value="1"/>
</dbReference>
<dbReference type="FunFam" id="3.90.226.10:FF:000001">
    <property type="entry name" value="ATP-dependent Clp protease proteolytic subunit"/>
    <property type="match status" value="1"/>
</dbReference>
<dbReference type="Gene3D" id="3.90.226.10">
    <property type="entry name" value="2-enoyl-CoA Hydratase, Chain A, domain 1"/>
    <property type="match status" value="1"/>
</dbReference>
<dbReference type="HAMAP" id="MF_00444">
    <property type="entry name" value="ClpP"/>
    <property type="match status" value="1"/>
</dbReference>
<dbReference type="InterPro" id="IPR001907">
    <property type="entry name" value="ClpP"/>
</dbReference>
<dbReference type="InterPro" id="IPR029045">
    <property type="entry name" value="ClpP/crotonase-like_dom_sf"/>
</dbReference>
<dbReference type="InterPro" id="IPR023562">
    <property type="entry name" value="ClpP/TepA"/>
</dbReference>
<dbReference type="InterPro" id="IPR033135">
    <property type="entry name" value="ClpP_His_AS"/>
</dbReference>
<dbReference type="InterPro" id="IPR018215">
    <property type="entry name" value="ClpP_Ser_AS"/>
</dbReference>
<dbReference type="NCBIfam" id="TIGR00493">
    <property type="entry name" value="clpP"/>
    <property type="match status" value="1"/>
</dbReference>
<dbReference type="NCBIfam" id="NF001368">
    <property type="entry name" value="PRK00277.1"/>
    <property type="match status" value="1"/>
</dbReference>
<dbReference type="NCBIfam" id="NF009205">
    <property type="entry name" value="PRK12553.1"/>
    <property type="match status" value="1"/>
</dbReference>
<dbReference type="PANTHER" id="PTHR10381">
    <property type="entry name" value="ATP-DEPENDENT CLP PROTEASE PROTEOLYTIC SUBUNIT"/>
    <property type="match status" value="1"/>
</dbReference>
<dbReference type="PANTHER" id="PTHR10381:SF70">
    <property type="entry name" value="ATP-DEPENDENT CLP PROTEASE PROTEOLYTIC SUBUNIT"/>
    <property type="match status" value="1"/>
</dbReference>
<dbReference type="Pfam" id="PF00574">
    <property type="entry name" value="CLP_protease"/>
    <property type="match status" value="1"/>
</dbReference>
<dbReference type="PRINTS" id="PR00127">
    <property type="entry name" value="CLPPROTEASEP"/>
</dbReference>
<dbReference type="SUPFAM" id="SSF52096">
    <property type="entry name" value="ClpP/crotonase"/>
    <property type="match status" value="1"/>
</dbReference>
<dbReference type="PROSITE" id="PS00382">
    <property type="entry name" value="CLP_PROTEASE_HIS"/>
    <property type="match status" value="1"/>
</dbReference>
<dbReference type="PROSITE" id="PS00381">
    <property type="entry name" value="CLP_PROTEASE_SER"/>
    <property type="match status" value="1"/>
</dbReference>
<comment type="function">
    <text evidence="1">Cleaves peptides in various proteins in a process that requires ATP hydrolysis. Has a chymotrypsin-like activity. Plays a major role in the degradation of misfolded proteins.</text>
</comment>
<comment type="catalytic activity">
    <reaction evidence="1">
        <text>Hydrolysis of proteins to small peptides in the presence of ATP and magnesium. alpha-casein is the usual test substrate. In the absence of ATP, only oligopeptides shorter than five residues are hydrolyzed (such as succinyl-Leu-Tyr-|-NHMec, and Leu-Tyr-Leu-|-Tyr-Trp, in which cleavage of the -Tyr-|-Leu- and -Tyr-|-Trp bonds also occurs).</text>
        <dbReference type="EC" id="3.4.21.92"/>
    </reaction>
</comment>
<comment type="subunit">
    <text evidence="1">Fourteen ClpP subunits assemble into 2 heptameric rings which stack back to back to give a disk-like structure with a central cavity, resembling the structure of eukaryotic proteasomes.</text>
</comment>
<comment type="subcellular location">
    <subcellularLocation>
        <location evidence="1">Cytoplasm</location>
    </subcellularLocation>
</comment>
<comment type="similarity">
    <text evidence="1">Belongs to the peptidase S14 family.</text>
</comment>
<comment type="sequence caution" evidence="2">
    <conflict type="erroneous initiation">
        <sequence resource="EMBL-CDS" id="AAO36848"/>
    </conflict>
</comment>
<name>CLPP_CLOTE</name>
<gene>
    <name evidence="1" type="primary">clpP</name>
    <name type="ordered locus">CTC_02375</name>
</gene>
<protein>
    <recommendedName>
        <fullName evidence="1">ATP-dependent Clp protease proteolytic subunit</fullName>
        <ecNumber evidence="1">3.4.21.92</ecNumber>
    </recommendedName>
    <alternativeName>
        <fullName evidence="1">Endopeptidase Clp</fullName>
    </alternativeName>
</protein>
<feature type="chain" id="PRO_0000179540" description="ATP-dependent Clp protease proteolytic subunit">
    <location>
        <begin position="1"/>
        <end position="194"/>
    </location>
</feature>
<feature type="active site" description="Nucleophile" evidence="1">
    <location>
        <position position="98"/>
    </location>
</feature>
<feature type="active site" evidence="1">
    <location>
        <position position="123"/>
    </location>
</feature>
<evidence type="ECO:0000255" key="1">
    <source>
        <dbReference type="HAMAP-Rule" id="MF_00444"/>
    </source>
</evidence>
<evidence type="ECO:0000305" key="2"/>